<comment type="subcellular location">
    <subcellularLocation>
        <location evidence="7">Secreted</location>
    </subcellularLocation>
</comment>
<comment type="alternative products">
    <event type="alternative splicing"/>
    <isoform>
        <id>Q5TIE3-1</id>
        <name>1</name>
        <sequence type="displayed"/>
    </isoform>
    <isoform>
        <id>Q5TIE3-2</id>
        <name>2</name>
        <sequence type="described" ref="VSP_040399 VSP_040400"/>
    </isoform>
    <isoform>
        <id>Q5TIE3-3</id>
        <name>3</name>
        <sequence type="described" ref="VSP_032580 VSP_032581 VSP_032582"/>
    </isoform>
    <isoform>
        <id>Q5TIE3-4</id>
        <name>4</name>
        <sequence type="described" ref="VSP_040399 VSP_040401 VSP_040403"/>
    </isoform>
    <isoform>
        <id>Q5TIE3-5</id>
        <name>5</name>
        <sequence type="described" ref="VSP_040399 VSP_040402"/>
    </isoform>
</comment>
<comment type="sequence caution" evidence="7">
    <conflict type="erroneous initiation">
        <sequence resource="EMBL-CDS" id="BAB71439"/>
    </conflict>
    <text>Truncated N-terminus.</text>
</comment>
<protein>
    <recommendedName>
        <fullName>von Willebrand factor A domain-containing protein 5B1</fullName>
    </recommendedName>
</protein>
<name>VW5B1_HUMAN</name>
<gene>
    <name type="primary">VWA5B1</name>
</gene>
<keyword id="KW-0025">Alternative splicing</keyword>
<keyword id="KW-0325">Glycoprotein</keyword>
<keyword id="KW-0597">Phosphoprotein</keyword>
<keyword id="KW-1267">Proteomics identification</keyword>
<keyword id="KW-1185">Reference proteome</keyword>
<keyword id="KW-0964">Secreted</keyword>
<keyword id="KW-0732">Signal</keyword>
<reference key="1">
    <citation type="journal article" date="2004" name="Nat. Genet.">
        <title>Complete sequencing and characterization of 21,243 full-length human cDNAs.</title>
        <authorList>
            <person name="Ota T."/>
            <person name="Suzuki Y."/>
            <person name="Nishikawa T."/>
            <person name="Otsuki T."/>
            <person name="Sugiyama T."/>
            <person name="Irie R."/>
            <person name="Wakamatsu A."/>
            <person name="Hayashi K."/>
            <person name="Sato H."/>
            <person name="Nagai K."/>
            <person name="Kimura K."/>
            <person name="Makita H."/>
            <person name="Sekine M."/>
            <person name="Obayashi M."/>
            <person name="Nishi T."/>
            <person name="Shibahara T."/>
            <person name="Tanaka T."/>
            <person name="Ishii S."/>
            <person name="Yamamoto J."/>
            <person name="Saito K."/>
            <person name="Kawai Y."/>
            <person name="Isono Y."/>
            <person name="Nakamura Y."/>
            <person name="Nagahari K."/>
            <person name="Murakami K."/>
            <person name="Yasuda T."/>
            <person name="Iwayanagi T."/>
            <person name="Wagatsuma M."/>
            <person name="Shiratori A."/>
            <person name="Sudo H."/>
            <person name="Hosoiri T."/>
            <person name="Kaku Y."/>
            <person name="Kodaira H."/>
            <person name="Kondo H."/>
            <person name="Sugawara M."/>
            <person name="Takahashi M."/>
            <person name="Kanda K."/>
            <person name="Yokoi T."/>
            <person name="Furuya T."/>
            <person name="Kikkawa E."/>
            <person name="Omura Y."/>
            <person name="Abe K."/>
            <person name="Kamihara K."/>
            <person name="Katsuta N."/>
            <person name="Sato K."/>
            <person name="Tanikawa M."/>
            <person name="Yamazaki M."/>
            <person name="Ninomiya K."/>
            <person name="Ishibashi T."/>
            <person name="Yamashita H."/>
            <person name="Murakawa K."/>
            <person name="Fujimori K."/>
            <person name="Tanai H."/>
            <person name="Kimata M."/>
            <person name="Watanabe M."/>
            <person name="Hiraoka S."/>
            <person name="Chiba Y."/>
            <person name="Ishida S."/>
            <person name="Ono Y."/>
            <person name="Takiguchi S."/>
            <person name="Watanabe S."/>
            <person name="Yosida M."/>
            <person name="Hotuta T."/>
            <person name="Kusano J."/>
            <person name="Kanehori K."/>
            <person name="Takahashi-Fujii A."/>
            <person name="Hara H."/>
            <person name="Tanase T.-O."/>
            <person name="Nomura Y."/>
            <person name="Togiya S."/>
            <person name="Komai F."/>
            <person name="Hara R."/>
            <person name="Takeuchi K."/>
            <person name="Arita M."/>
            <person name="Imose N."/>
            <person name="Musashino K."/>
            <person name="Yuuki H."/>
            <person name="Oshima A."/>
            <person name="Sasaki N."/>
            <person name="Aotsuka S."/>
            <person name="Yoshikawa Y."/>
            <person name="Matsunawa H."/>
            <person name="Ichihara T."/>
            <person name="Shiohata N."/>
            <person name="Sano S."/>
            <person name="Moriya S."/>
            <person name="Momiyama H."/>
            <person name="Satoh N."/>
            <person name="Takami S."/>
            <person name="Terashima Y."/>
            <person name="Suzuki O."/>
            <person name="Nakagawa S."/>
            <person name="Senoh A."/>
            <person name="Mizoguchi H."/>
            <person name="Goto Y."/>
            <person name="Shimizu F."/>
            <person name="Wakebe H."/>
            <person name="Hishigaki H."/>
            <person name="Watanabe T."/>
            <person name="Sugiyama A."/>
            <person name="Takemoto M."/>
            <person name="Kawakami B."/>
            <person name="Yamazaki M."/>
            <person name="Watanabe K."/>
            <person name="Kumagai A."/>
            <person name="Itakura S."/>
            <person name="Fukuzumi Y."/>
            <person name="Fujimori Y."/>
            <person name="Komiyama M."/>
            <person name="Tashiro H."/>
            <person name="Tanigami A."/>
            <person name="Fujiwara T."/>
            <person name="Ono T."/>
            <person name="Yamada K."/>
            <person name="Fujii Y."/>
            <person name="Ozaki K."/>
            <person name="Hirao M."/>
            <person name="Ohmori Y."/>
            <person name="Kawabata A."/>
            <person name="Hikiji T."/>
            <person name="Kobatake N."/>
            <person name="Inagaki H."/>
            <person name="Ikema Y."/>
            <person name="Okamoto S."/>
            <person name="Okitani R."/>
            <person name="Kawakami T."/>
            <person name="Noguchi S."/>
            <person name="Itoh T."/>
            <person name="Shigeta K."/>
            <person name="Senba T."/>
            <person name="Matsumura K."/>
            <person name="Nakajima Y."/>
            <person name="Mizuno T."/>
            <person name="Morinaga M."/>
            <person name="Sasaki M."/>
            <person name="Togashi T."/>
            <person name="Oyama M."/>
            <person name="Hata H."/>
            <person name="Watanabe M."/>
            <person name="Komatsu T."/>
            <person name="Mizushima-Sugano J."/>
            <person name="Satoh T."/>
            <person name="Shirai Y."/>
            <person name="Takahashi Y."/>
            <person name="Nakagawa K."/>
            <person name="Okumura K."/>
            <person name="Nagase T."/>
            <person name="Nomura N."/>
            <person name="Kikuchi H."/>
            <person name="Masuho Y."/>
            <person name="Yamashita R."/>
            <person name="Nakai K."/>
            <person name="Yada T."/>
            <person name="Nakamura Y."/>
            <person name="Ohara O."/>
            <person name="Isogai T."/>
            <person name="Sugano S."/>
        </authorList>
    </citation>
    <scope>NUCLEOTIDE SEQUENCE [LARGE SCALE MRNA] (ISOFORM 3)</scope>
    <scope>NUCLEOTIDE SEQUENCE [LARGE SCALE MRNA] OF 575-1016 (ISOFORM 4)</scope>
    <source>
        <tissue>Testis</tissue>
    </source>
</reference>
<reference key="2">
    <citation type="journal article" date="2006" name="Nature">
        <title>The DNA sequence and biological annotation of human chromosome 1.</title>
        <authorList>
            <person name="Gregory S.G."/>
            <person name="Barlow K.F."/>
            <person name="McLay K.E."/>
            <person name="Kaul R."/>
            <person name="Swarbreck D."/>
            <person name="Dunham A."/>
            <person name="Scott C.E."/>
            <person name="Howe K.L."/>
            <person name="Woodfine K."/>
            <person name="Spencer C.C.A."/>
            <person name="Jones M.C."/>
            <person name="Gillson C."/>
            <person name="Searle S."/>
            <person name="Zhou Y."/>
            <person name="Kokocinski F."/>
            <person name="McDonald L."/>
            <person name="Evans R."/>
            <person name="Phillips K."/>
            <person name="Atkinson A."/>
            <person name="Cooper R."/>
            <person name="Jones C."/>
            <person name="Hall R.E."/>
            <person name="Andrews T.D."/>
            <person name="Lloyd C."/>
            <person name="Ainscough R."/>
            <person name="Almeida J.P."/>
            <person name="Ambrose K.D."/>
            <person name="Anderson F."/>
            <person name="Andrew R.W."/>
            <person name="Ashwell R.I.S."/>
            <person name="Aubin K."/>
            <person name="Babbage A.K."/>
            <person name="Bagguley C.L."/>
            <person name="Bailey J."/>
            <person name="Beasley H."/>
            <person name="Bethel G."/>
            <person name="Bird C.P."/>
            <person name="Bray-Allen S."/>
            <person name="Brown J.Y."/>
            <person name="Brown A.J."/>
            <person name="Buckley D."/>
            <person name="Burton J."/>
            <person name="Bye J."/>
            <person name="Carder C."/>
            <person name="Chapman J.C."/>
            <person name="Clark S.Y."/>
            <person name="Clarke G."/>
            <person name="Clee C."/>
            <person name="Cobley V."/>
            <person name="Collier R.E."/>
            <person name="Corby N."/>
            <person name="Coville G.J."/>
            <person name="Davies J."/>
            <person name="Deadman R."/>
            <person name="Dunn M."/>
            <person name="Earthrowl M."/>
            <person name="Ellington A.G."/>
            <person name="Errington H."/>
            <person name="Frankish A."/>
            <person name="Frankland J."/>
            <person name="French L."/>
            <person name="Garner P."/>
            <person name="Garnett J."/>
            <person name="Gay L."/>
            <person name="Ghori M.R.J."/>
            <person name="Gibson R."/>
            <person name="Gilby L.M."/>
            <person name="Gillett W."/>
            <person name="Glithero R.J."/>
            <person name="Grafham D.V."/>
            <person name="Griffiths C."/>
            <person name="Griffiths-Jones S."/>
            <person name="Grocock R."/>
            <person name="Hammond S."/>
            <person name="Harrison E.S.I."/>
            <person name="Hart E."/>
            <person name="Haugen E."/>
            <person name="Heath P.D."/>
            <person name="Holmes S."/>
            <person name="Holt K."/>
            <person name="Howden P.J."/>
            <person name="Hunt A.R."/>
            <person name="Hunt S.E."/>
            <person name="Hunter G."/>
            <person name="Isherwood J."/>
            <person name="James R."/>
            <person name="Johnson C."/>
            <person name="Johnson D."/>
            <person name="Joy A."/>
            <person name="Kay M."/>
            <person name="Kershaw J.K."/>
            <person name="Kibukawa M."/>
            <person name="Kimberley A.M."/>
            <person name="King A."/>
            <person name="Knights A.J."/>
            <person name="Lad H."/>
            <person name="Laird G."/>
            <person name="Lawlor S."/>
            <person name="Leongamornlert D.A."/>
            <person name="Lloyd D.M."/>
            <person name="Loveland J."/>
            <person name="Lovell J."/>
            <person name="Lush M.J."/>
            <person name="Lyne R."/>
            <person name="Martin S."/>
            <person name="Mashreghi-Mohammadi M."/>
            <person name="Matthews L."/>
            <person name="Matthews N.S.W."/>
            <person name="McLaren S."/>
            <person name="Milne S."/>
            <person name="Mistry S."/>
            <person name="Moore M.J.F."/>
            <person name="Nickerson T."/>
            <person name="O'Dell C.N."/>
            <person name="Oliver K."/>
            <person name="Palmeiri A."/>
            <person name="Palmer S.A."/>
            <person name="Parker A."/>
            <person name="Patel D."/>
            <person name="Pearce A.V."/>
            <person name="Peck A.I."/>
            <person name="Pelan S."/>
            <person name="Phelps K."/>
            <person name="Phillimore B.J."/>
            <person name="Plumb R."/>
            <person name="Rajan J."/>
            <person name="Raymond C."/>
            <person name="Rouse G."/>
            <person name="Saenphimmachak C."/>
            <person name="Sehra H.K."/>
            <person name="Sheridan E."/>
            <person name="Shownkeen R."/>
            <person name="Sims S."/>
            <person name="Skuce C.D."/>
            <person name="Smith M."/>
            <person name="Steward C."/>
            <person name="Subramanian S."/>
            <person name="Sycamore N."/>
            <person name="Tracey A."/>
            <person name="Tromans A."/>
            <person name="Van Helmond Z."/>
            <person name="Wall M."/>
            <person name="Wallis J.M."/>
            <person name="White S."/>
            <person name="Whitehead S.L."/>
            <person name="Wilkinson J.E."/>
            <person name="Willey D.L."/>
            <person name="Williams H."/>
            <person name="Wilming L."/>
            <person name="Wray P.W."/>
            <person name="Wu Z."/>
            <person name="Coulson A."/>
            <person name="Vaudin M."/>
            <person name="Sulston J.E."/>
            <person name="Durbin R.M."/>
            <person name="Hubbard T."/>
            <person name="Wooster R."/>
            <person name="Dunham I."/>
            <person name="Carter N.P."/>
            <person name="McVean G."/>
            <person name="Ross M.T."/>
            <person name="Harrow J."/>
            <person name="Olson M.V."/>
            <person name="Beck S."/>
            <person name="Rogers J."/>
            <person name="Bentley D.R."/>
        </authorList>
    </citation>
    <scope>NUCLEOTIDE SEQUENCE [LARGE SCALE GENOMIC DNA]</scope>
</reference>
<reference key="3">
    <citation type="journal article" date="2004" name="Genome Res.">
        <title>The status, quality, and expansion of the NIH full-length cDNA project: the Mammalian Gene Collection (MGC).</title>
        <authorList>
            <consortium name="The MGC Project Team"/>
        </authorList>
    </citation>
    <scope>NUCLEOTIDE SEQUENCE [LARGE SCALE MRNA] OF 576-1208 (ISOFORM 2)</scope>
    <scope>NUCLEOTIDE SEQUENCE [LARGE SCALE MRNA] OF 576-1207 (ISOFORM 5)</scope>
</reference>
<reference key="4">
    <citation type="journal article" date="2008" name="Proc. Natl. Acad. Sci. U.S.A.">
        <title>A quantitative atlas of mitotic phosphorylation.</title>
        <authorList>
            <person name="Dephoure N."/>
            <person name="Zhou C."/>
            <person name="Villen J."/>
            <person name="Beausoleil S.A."/>
            <person name="Bakalarski C.E."/>
            <person name="Elledge S.J."/>
            <person name="Gygi S.P."/>
        </authorList>
    </citation>
    <scope>PHOSPHORYLATION [LARGE SCALE ANALYSIS] AT TYR-881</scope>
    <scope>IDENTIFICATION BY MASS SPECTROMETRY [LARGE SCALE ANALYSIS]</scope>
    <source>
        <tissue>Cervix carcinoma</tissue>
    </source>
</reference>
<dbReference type="EMBL" id="AK057346">
    <property type="protein sequence ID" value="BAB71439.1"/>
    <property type="status" value="ALT_INIT"/>
    <property type="molecule type" value="mRNA"/>
</dbReference>
<dbReference type="EMBL" id="AK125833">
    <property type="protein sequence ID" value="BAC86312.1"/>
    <property type="molecule type" value="mRNA"/>
</dbReference>
<dbReference type="EMBL" id="AL020998">
    <property type="status" value="NOT_ANNOTATED_CDS"/>
    <property type="molecule type" value="Genomic_DNA"/>
</dbReference>
<dbReference type="EMBL" id="BC101378">
    <property type="protein sequence ID" value="AAI01379.1"/>
    <property type="molecule type" value="mRNA"/>
</dbReference>
<dbReference type="EMBL" id="BC101379">
    <property type="protein sequence ID" value="AAI01380.1"/>
    <property type="molecule type" value="mRNA"/>
</dbReference>
<dbReference type="EMBL" id="BC101380">
    <property type="protein sequence ID" value="AAI01381.1"/>
    <property type="molecule type" value="mRNA"/>
</dbReference>
<dbReference type="EMBL" id="BC101381">
    <property type="protein sequence ID" value="AAI01382.1"/>
    <property type="molecule type" value="mRNA"/>
</dbReference>
<dbReference type="RefSeq" id="NP_001034589.2">
    <molecule id="Q5TIE3-2"/>
    <property type="nucleotide sequence ID" value="NM_001039500.3"/>
</dbReference>
<dbReference type="RefSeq" id="XP_011538985.1">
    <molecule id="Q5TIE3-2"/>
    <property type="nucleotide sequence ID" value="XM_011540683.3"/>
</dbReference>
<dbReference type="RefSeq" id="XP_011538986.1">
    <molecule id="Q5TIE3-2"/>
    <property type="nucleotide sequence ID" value="XM_011540684.3"/>
</dbReference>
<dbReference type="RefSeq" id="XP_011538987.1">
    <molecule id="Q5TIE3-2"/>
    <property type="nucleotide sequence ID" value="XM_011540685.3"/>
</dbReference>
<dbReference type="RefSeq" id="XP_011538990.1">
    <molecule id="Q5TIE3-5"/>
    <property type="nucleotide sequence ID" value="XM_011540688.3"/>
</dbReference>
<dbReference type="RefSeq" id="XP_011538995.1">
    <molecule id="Q5TIE3-4"/>
    <property type="nucleotide sequence ID" value="XM_011540693.2"/>
</dbReference>
<dbReference type="BioGRID" id="126081">
    <property type="interactions" value="1"/>
</dbReference>
<dbReference type="FunCoup" id="Q5TIE3">
    <property type="interactions" value="4"/>
</dbReference>
<dbReference type="IntAct" id="Q5TIE3">
    <property type="interactions" value="1"/>
</dbReference>
<dbReference type="STRING" id="9606.ENSP00000364220"/>
<dbReference type="GlyCosmos" id="Q5TIE3">
    <property type="glycosylation" value="3 sites, No reported glycans"/>
</dbReference>
<dbReference type="GlyGen" id="Q5TIE3">
    <property type="glycosylation" value="4 sites"/>
</dbReference>
<dbReference type="iPTMnet" id="Q5TIE3"/>
<dbReference type="PhosphoSitePlus" id="Q5TIE3"/>
<dbReference type="BioMuta" id="VWA5B1"/>
<dbReference type="DMDM" id="172045919"/>
<dbReference type="MassIVE" id="Q5TIE3"/>
<dbReference type="PaxDb" id="9606-ENSP00000364220"/>
<dbReference type="PeptideAtlas" id="Q5TIE3"/>
<dbReference type="ProteomicsDB" id="65193">
    <molecule id="Q5TIE3-1"/>
</dbReference>
<dbReference type="ProteomicsDB" id="65194">
    <molecule id="Q5TIE3-2"/>
</dbReference>
<dbReference type="ProteomicsDB" id="65195">
    <molecule id="Q5TIE3-3"/>
</dbReference>
<dbReference type="ProteomicsDB" id="65196">
    <molecule id="Q5TIE3-4"/>
</dbReference>
<dbReference type="ProteomicsDB" id="65197">
    <molecule id="Q5TIE3-5"/>
</dbReference>
<dbReference type="Antibodypedia" id="29787">
    <property type="antibodies" value="9 antibodies from 7 providers"/>
</dbReference>
<dbReference type="DNASU" id="127731"/>
<dbReference type="Ensembl" id="ENST00000289815.13">
    <molecule id="Q5TIE3-2"/>
    <property type="protein sequence ID" value="ENSP00000289815.9"/>
    <property type="gene ID" value="ENSG00000158816.16"/>
</dbReference>
<dbReference type="Ensembl" id="ENST00000375079.6">
    <molecule id="Q5TIE3-1"/>
    <property type="protein sequence ID" value="ENSP00000364220.1"/>
    <property type="gene ID" value="ENSG00000158816.16"/>
</dbReference>
<dbReference type="GeneID" id="127731"/>
<dbReference type="KEGG" id="hsa:127731"/>
<dbReference type="MANE-Select" id="ENST00000289815.13">
    <molecule id="Q5TIE3-2"/>
    <property type="protein sequence ID" value="ENSP00000289815.9"/>
    <property type="RefSeq nucleotide sequence ID" value="NM_001039500.3"/>
    <property type="RefSeq protein sequence ID" value="NP_001034589.2"/>
</dbReference>
<dbReference type="UCSC" id="uc009vps.2">
    <molecule id="Q5TIE3-1"/>
    <property type="organism name" value="human"/>
</dbReference>
<dbReference type="AGR" id="HGNC:26538"/>
<dbReference type="CTD" id="127731"/>
<dbReference type="DisGeNET" id="127731"/>
<dbReference type="GeneCards" id="VWA5B1"/>
<dbReference type="HGNC" id="HGNC:26538">
    <property type="gene designation" value="VWA5B1"/>
</dbReference>
<dbReference type="HPA" id="ENSG00000158816">
    <property type="expression patterns" value="Tissue enriched (choroid)"/>
</dbReference>
<dbReference type="neXtProt" id="NX_Q5TIE3"/>
<dbReference type="OpenTargets" id="ENSG00000158816"/>
<dbReference type="VEuPathDB" id="HostDB:ENSG00000158816"/>
<dbReference type="eggNOG" id="ENOG502QVJP">
    <property type="taxonomic scope" value="Eukaryota"/>
</dbReference>
<dbReference type="GeneTree" id="ENSGT00940000158938"/>
<dbReference type="HOGENOM" id="CLU_005270_0_0_1"/>
<dbReference type="InParanoid" id="Q5TIE3"/>
<dbReference type="OMA" id="PMKWEVV"/>
<dbReference type="OrthoDB" id="1729737at2759"/>
<dbReference type="PAN-GO" id="Q5TIE3">
    <property type="GO annotations" value="0 GO annotations based on evolutionary models"/>
</dbReference>
<dbReference type="PhylomeDB" id="Q5TIE3"/>
<dbReference type="TreeFam" id="TF329720"/>
<dbReference type="PathwayCommons" id="Q5TIE3"/>
<dbReference type="SignaLink" id="Q5TIE3"/>
<dbReference type="BioGRID-ORCS" id="127731">
    <property type="hits" value="5 hits in 305 CRISPR screens"/>
</dbReference>
<dbReference type="ChiTaRS" id="VWA5B1">
    <property type="organism name" value="human"/>
</dbReference>
<dbReference type="GenomeRNAi" id="127731"/>
<dbReference type="Pharos" id="Q5TIE3">
    <property type="development level" value="Tdark"/>
</dbReference>
<dbReference type="PRO" id="PR:Q5TIE3"/>
<dbReference type="Proteomes" id="UP000005640">
    <property type="component" value="Chromosome 1"/>
</dbReference>
<dbReference type="RNAct" id="Q5TIE3">
    <property type="molecule type" value="protein"/>
</dbReference>
<dbReference type="Bgee" id="ENSG00000158816">
    <property type="expression patterns" value="Expressed in pituitary gland and 71 other cell types or tissues"/>
</dbReference>
<dbReference type="ExpressionAtlas" id="Q5TIE3">
    <property type="expression patterns" value="baseline and differential"/>
</dbReference>
<dbReference type="GO" id="GO:0005576">
    <property type="term" value="C:extracellular region"/>
    <property type="evidence" value="ECO:0007669"/>
    <property type="project" value="UniProtKB-SubCell"/>
</dbReference>
<dbReference type="CDD" id="cd01461">
    <property type="entry name" value="vWA_interalpha_trypsin_inhibitor"/>
    <property type="match status" value="1"/>
</dbReference>
<dbReference type="Gene3D" id="3.40.50.410">
    <property type="entry name" value="von Willebrand factor, type A domain"/>
    <property type="match status" value="1"/>
</dbReference>
<dbReference type="InterPro" id="IPR013694">
    <property type="entry name" value="VIT"/>
</dbReference>
<dbReference type="InterPro" id="IPR052627">
    <property type="entry name" value="VWA_domain-containing"/>
</dbReference>
<dbReference type="InterPro" id="IPR002035">
    <property type="entry name" value="VWF_A"/>
</dbReference>
<dbReference type="InterPro" id="IPR036465">
    <property type="entry name" value="vWFA_dom_sf"/>
</dbReference>
<dbReference type="PANTHER" id="PTHR46299:SF1">
    <property type="entry name" value="VON WILLEBRAND FACTOR A DOMAIN-CONTAINING PROTEIN 5B1"/>
    <property type="match status" value="1"/>
</dbReference>
<dbReference type="PANTHER" id="PTHR46299">
    <property type="entry name" value="VON WILLEBRAND FACTOR A DOMAIN-CONTAINING PROTEIN 5B2-RELATED"/>
    <property type="match status" value="1"/>
</dbReference>
<dbReference type="Pfam" id="PF13757">
    <property type="entry name" value="VIT_2"/>
    <property type="match status" value="1"/>
</dbReference>
<dbReference type="Pfam" id="PF13768">
    <property type="entry name" value="VWA_3"/>
    <property type="match status" value="1"/>
</dbReference>
<dbReference type="SMART" id="SM00327">
    <property type="entry name" value="VWA"/>
    <property type="match status" value="1"/>
</dbReference>
<dbReference type="SUPFAM" id="SSF53300">
    <property type="entry name" value="vWA-like"/>
    <property type="match status" value="1"/>
</dbReference>
<dbReference type="PROSITE" id="PS51468">
    <property type="entry name" value="VIT"/>
    <property type="match status" value="1"/>
</dbReference>
<dbReference type="PROSITE" id="PS50234">
    <property type="entry name" value="VWFA"/>
    <property type="match status" value="1"/>
</dbReference>
<sequence>MPGLLNWITGAALPLTASDVTSCVSGYALGLTASLTYGNLEAQPFQGLFVYPLDECTTVIGFEAVIADRVVTVQIKDKAKLESGHFDASHVRSPTVTGNILQDGVSIAPHSCTPGKVTLDEDLERILFVANLGTIAPMENVTIFISTSSELPTLPSGAVRVLLPAVCAPTVPQFCTKSTGTSNQQAQGKDRHCFGAWAPGSWNKLCLATLLNTEVSNPMEYEFNFQLEIRGPCLLAGVESPTHEIRADAAPSARSAKSIIITLANKHTFDRPVEILIHPSEPHMPHVLIEKGDMTLGEFDQHLKGRTDFIKGMKKKSRAERKTEIIRKRLHKDIPHHSVIMLNFCPDLQSVQPCLRKAHGEFIFLIDRSSSMSGISMHRVKDAMLVALKSLMPACLFNIIGFGSTFKSLFPSSQTYSEDSLAMACDDIQRMKADMGGTNILSPLKWVIRQPVHRGHPRLLFVITDGAVNNTGKVLELVRNHAFSTRCYSFGIGPNVCHRLVKGLASVSEGSAELLMEGERLQPKMVKSLKKAMAPVLSDVTVEWIFPETTEVLVSPVSASSLFPGERLVGYGIVCDASLHISNPRSDKRRRYSMLHSQESGSSVFYHSQDDGPGLEGGDCAKNSGAPFILGQAKNARLASGDSTTKHDLNLSQRRRAYSTNQITNHKPLPRATMASDPMPAAKRYPLRKARLQDLTNQTSLDVQRWQIDLQPLLNSGQDLNQGPKLRGPGARRPSLLPQGCQPFLPWGQETQAWSPVRERTSDSRSPGDLEPSHHPSAFETETSSDWDPPAESQERASPSRPATPAPVLGKALVKGLHDSQRLQWEVSFELGTPGPERGGAQDADLWSETFHHLAARAIIRDFEQLAEREGEIEQGSNRRYQVSALHTSKACNIISKYTAFVPVDVSKSRYLPTVVEYPNSAALRMLGSRALAQQWRGTSSGFGRPQTMLGEDSAPGNGKFQALNMEASPTALFSEARSPGREKHGASEGPQRSLATNTLSSMKASENLFGSWLNLNKSRLLTRAAKGFLSKPLIKAVESTSGNQSFDYIPLVSLQLASGAFLLNEAFCEATHIPMEKLKWTSPFTCHRVSLTTRPSESKTPSPQLCTSSPPRHPSCDSFSLEPLAKGKLGLEPRAVVEHTGKLWATVVGLAWLEHSSASYFTEWELVAAKANSWLEQQEVPEGRTQGTLKAAARQLFVLLRHWDENLEFNMLCYNPNYV</sequence>
<evidence type="ECO:0000255" key="1"/>
<evidence type="ECO:0000255" key="2">
    <source>
        <dbReference type="PROSITE-ProRule" id="PRU00219"/>
    </source>
</evidence>
<evidence type="ECO:0000255" key="3">
    <source>
        <dbReference type="PROSITE-ProRule" id="PRU00801"/>
    </source>
</evidence>
<evidence type="ECO:0000256" key="4">
    <source>
        <dbReference type="SAM" id="MobiDB-lite"/>
    </source>
</evidence>
<evidence type="ECO:0000303" key="5">
    <source>
    </source>
</evidence>
<evidence type="ECO:0000303" key="6">
    <source>
    </source>
</evidence>
<evidence type="ECO:0000305" key="7"/>
<evidence type="ECO:0007744" key="8">
    <source>
    </source>
</evidence>
<proteinExistence type="evidence at protein level"/>
<feature type="signal peptide" evidence="1">
    <location>
        <begin position="1"/>
        <end position="18"/>
    </location>
</feature>
<feature type="chain" id="PRO_0000326173" description="von Willebrand factor A domain-containing protein 5B1">
    <location>
        <begin position="19"/>
        <end position="1220"/>
    </location>
</feature>
<feature type="domain" description="VIT" evidence="3">
    <location>
        <begin position="19"/>
        <end position="149"/>
    </location>
</feature>
<feature type="domain" description="VWFA" evidence="2">
    <location>
        <begin position="361"/>
        <end position="529"/>
    </location>
</feature>
<feature type="region of interest" description="Disordered" evidence="4">
    <location>
        <begin position="715"/>
        <end position="807"/>
    </location>
</feature>
<feature type="region of interest" description="Disordered" evidence="4">
    <location>
        <begin position="937"/>
        <end position="962"/>
    </location>
</feature>
<feature type="region of interest" description="Disordered" evidence="4">
    <location>
        <begin position="976"/>
        <end position="995"/>
    </location>
</feature>
<feature type="region of interest" description="Disordered" evidence="4">
    <location>
        <begin position="1093"/>
        <end position="1115"/>
    </location>
</feature>
<feature type="compositionally biased region" description="Basic and acidic residues" evidence="4">
    <location>
        <begin position="757"/>
        <end position="774"/>
    </location>
</feature>
<feature type="compositionally biased region" description="Low complexity" evidence="4">
    <location>
        <begin position="796"/>
        <end position="807"/>
    </location>
</feature>
<feature type="compositionally biased region" description="Polar residues" evidence="4">
    <location>
        <begin position="1093"/>
        <end position="1111"/>
    </location>
</feature>
<feature type="modified residue" description="Phosphotyrosine" evidence="8">
    <location>
        <position position="881"/>
    </location>
</feature>
<feature type="glycosylation site" description="N-linked (GlcNAc...) asparagine" evidence="1">
    <location>
        <position position="140"/>
    </location>
</feature>
<feature type="glycosylation site" description="N-linked (GlcNAc...) asparagine" evidence="1">
    <location>
        <position position="650"/>
    </location>
</feature>
<feature type="glycosylation site" description="N-linked (GlcNAc...) asparagine" evidence="1">
    <location>
        <position position="1017"/>
    </location>
</feature>
<feature type="splice variant" id="VSP_032580" description="In isoform 3." evidence="5">
    <location>
        <begin position="1"/>
        <end position="283"/>
    </location>
</feature>
<feature type="splice variant" id="VSP_032581" description="In isoform 3." evidence="5">
    <original>PLLNSGQDLNQGPKLRGPG</original>
    <variation>AFICLTSEDTFQIRTPTGQ</variation>
    <location>
        <begin position="712"/>
        <end position="730"/>
    </location>
</feature>
<feature type="splice variant" id="VSP_032582" description="In isoform 3." evidence="5">
    <location>
        <begin position="731"/>
        <end position="1220"/>
    </location>
</feature>
<feature type="splice variant" id="VSP_040399" description="In isoform 2, isoform 4 and isoform 5." evidence="5 6">
    <original>S</original>
    <variation>SG</variation>
    <location>
        <position position="921"/>
    </location>
</feature>
<feature type="splice variant" id="VSP_040400" description="In isoform 2." evidence="6">
    <original>GKFQALN</original>
    <variation>D</variation>
    <location>
        <begin position="959"/>
        <end position="965"/>
    </location>
</feature>
<feature type="splice variant" id="VSP_040401" description="In isoform 4." evidence="5">
    <original>KFQALNMEASPTALFSEARSPGREKHGASEGPQRSLATNTLSSMKASENLFGSWLNL</original>
    <variation>PRKCSQTLMGFKTKTETEHSVRGWKPRGALQNQSVLSTSWSHWPPKPRRTSSTPEPS</variation>
    <location>
        <begin position="960"/>
        <end position="1016"/>
    </location>
</feature>
<feature type="splice variant" id="VSP_040402" description="In isoform 5." evidence="6">
    <location>
        <begin position="960"/>
        <end position="990"/>
    </location>
</feature>
<feature type="splice variant" id="VSP_040403" description="In isoform 4." evidence="5">
    <location>
        <begin position="1017"/>
        <end position="1220"/>
    </location>
</feature>
<feature type="sequence variant" id="VAR_039994" description="In dbSNP:rs2872972.">
    <original>A</original>
    <variation>S</variation>
    <location>
        <position position="319"/>
    </location>
</feature>
<feature type="sequence variant" id="VAR_039995" description="In dbSNP:rs2072752.">
    <original>N</original>
    <variation>S</variation>
    <location>
        <position position="469"/>
    </location>
</feature>
<feature type="sequence variant" id="VAR_039996" description="In dbSNP:rs12072406.">
    <original>S</original>
    <variation>N</variation>
    <location>
        <position position="506"/>
    </location>
</feature>
<feature type="sequence variant" id="VAR_039997" description="In dbSNP:rs10916769.">
    <original>K</original>
    <variation>R</variation>
    <location>
        <position position="634"/>
    </location>
</feature>
<feature type="sequence conflict" description="In Ref. 1; BAC86312." evidence="7" ref="1">
    <original>H</original>
    <variation>R</variation>
    <location>
        <position position="302"/>
    </location>
</feature>
<feature type="sequence conflict" description="In Ref. 3; AAI01381." evidence="7" ref="3">
    <original>R</original>
    <variation>H</variation>
    <location>
        <position position="880"/>
    </location>
</feature>
<feature type="sequence conflict" description="In Ref. 3; AAI01381." evidence="7" ref="3">
    <original>L</original>
    <variation>R</variation>
    <location>
        <position position="1208"/>
    </location>
</feature>
<accession>Q5TIE3</accession>
<accession>A4IF35</accession>
<accession>A4IF36</accession>
<accession>Q3ZCM4</accession>
<accession>Q6ZUB4</accession>
<accession>Q96M71</accession>
<organism>
    <name type="scientific">Homo sapiens</name>
    <name type="common">Human</name>
    <dbReference type="NCBI Taxonomy" id="9606"/>
    <lineage>
        <taxon>Eukaryota</taxon>
        <taxon>Metazoa</taxon>
        <taxon>Chordata</taxon>
        <taxon>Craniata</taxon>
        <taxon>Vertebrata</taxon>
        <taxon>Euteleostomi</taxon>
        <taxon>Mammalia</taxon>
        <taxon>Eutheria</taxon>
        <taxon>Euarchontoglires</taxon>
        <taxon>Primates</taxon>
        <taxon>Haplorrhini</taxon>
        <taxon>Catarrhini</taxon>
        <taxon>Hominidae</taxon>
        <taxon>Homo</taxon>
    </lineage>
</organism>